<organism>
    <name type="scientific">Bos taurus</name>
    <name type="common">Bovine</name>
    <dbReference type="NCBI Taxonomy" id="9913"/>
    <lineage>
        <taxon>Eukaryota</taxon>
        <taxon>Metazoa</taxon>
        <taxon>Chordata</taxon>
        <taxon>Craniata</taxon>
        <taxon>Vertebrata</taxon>
        <taxon>Euteleostomi</taxon>
        <taxon>Mammalia</taxon>
        <taxon>Eutheria</taxon>
        <taxon>Laurasiatheria</taxon>
        <taxon>Artiodactyla</taxon>
        <taxon>Ruminantia</taxon>
        <taxon>Pecora</taxon>
        <taxon>Bovidae</taxon>
        <taxon>Bovinae</taxon>
        <taxon>Bos</taxon>
    </lineage>
</organism>
<accession>Q29432</accession>
<accession>A7YWR8</accession>
<keyword id="KW-0064">Aspartyl protease</keyword>
<keyword id="KW-0903">Direct protein sequencing</keyword>
<keyword id="KW-1015">Disulfide bond</keyword>
<keyword id="KW-0325">Glycoprotein</keyword>
<keyword id="KW-0378">Hydrolase</keyword>
<keyword id="KW-0645">Protease</keyword>
<keyword id="KW-1185">Reference proteome</keyword>
<keyword id="KW-0964">Secreted</keyword>
<keyword id="KW-0732">Signal</keyword>
<keyword id="KW-0865">Zymogen</keyword>
<proteinExistence type="evidence at protein level"/>
<name>PAG1_BOVIN</name>
<dbReference type="EC" id="3.4.23.-"/>
<dbReference type="EMBL" id="M73962">
    <property type="protein sequence ID" value="AAB53145.1"/>
    <property type="molecule type" value="mRNA"/>
</dbReference>
<dbReference type="EMBL" id="L27832">
    <property type="protein sequence ID" value="AAA96331.1"/>
    <property type="molecule type" value="Genomic_DNA"/>
</dbReference>
<dbReference type="EMBL" id="L27833">
    <property type="protein sequence ID" value="AAA96331.1"/>
    <property type="status" value="JOINED"/>
    <property type="molecule type" value="Genomic_DNA"/>
</dbReference>
<dbReference type="EMBL" id="L27834">
    <property type="protein sequence ID" value="AAA96331.1"/>
    <property type="status" value="JOINED"/>
    <property type="molecule type" value="Genomic_DNA"/>
</dbReference>
<dbReference type="EMBL" id="BC134743">
    <property type="protein sequence ID" value="AAI34744.1"/>
    <property type="molecule type" value="mRNA"/>
</dbReference>
<dbReference type="PIR" id="B41545">
    <property type="entry name" value="B41545"/>
</dbReference>
<dbReference type="RefSeq" id="NP_776836.1">
    <property type="nucleotide sequence ID" value="NM_174411.2"/>
</dbReference>
<dbReference type="SMR" id="Q29432"/>
<dbReference type="FunCoup" id="Q29432">
    <property type="interactions" value="69"/>
</dbReference>
<dbReference type="STRING" id="9913.ENSBTAP00000055271"/>
<dbReference type="MEROPS" id="A01.089"/>
<dbReference type="GlyGen" id="Q29432">
    <property type="glycosylation" value="4 sites"/>
</dbReference>
<dbReference type="iPTMnet" id="Q29432"/>
<dbReference type="PaxDb" id="9913-ENSBTAP00000025593"/>
<dbReference type="GeneID" id="281964"/>
<dbReference type="KEGG" id="bta:281964"/>
<dbReference type="eggNOG" id="KOG1339">
    <property type="taxonomic scope" value="Eukaryota"/>
</dbReference>
<dbReference type="HOGENOM" id="CLU_013253_3_0_1"/>
<dbReference type="InParanoid" id="Q29432"/>
<dbReference type="OrthoDB" id="9695215at2759"/>
<dbReference type="TreeFam" id="TF314990"/>
<dbReference type="Proteomes" id="UP000009136">
    <property type="component" value="Unplaced"/>
</dbReference>
<dbReference type="GO" id="GO:0005576">
    <property type="term" value="C:extracellular region"/>
    <property type="evidence" value="ECO:0007669"/>
    <property type="project" value="UniProtKB-SubCell"/>
</dbReference>
<dbReference type="GO" id="GO:0004190">
    <property type="term" value="F:aspartic-type endopeptidase activity"/>
    <property type="evidence" value="ECO:0000318"/>
    <property type="project" value="GO_Central"/>
</dbReference>
<dbReference type="GO" id="GO:0006508">
    <property type="term" value="P:proteolysis"/>
    <property type="evidence" value="ECO:0000318"/>
    <property type="project" value="GO_Central"/>
</dbReference>
<dbReference type="FunFam" id="2.40.70.10:FF:000006">
    <property type="entry name" value="Cathepsin E"/>
    <property type="match status" value="1"/>
</dbReference>
<dbReference type="FunFam" id="2.40.70.10:FF:000004">
    <property type="entry name" value="Pepsin A"/>
    <property type="match status" value="1"/>
</dbReference>
<dbReference type="Gene3D" id="6.10.140.60">
    <property type="match status" value="1"/>
</dbReference>
<dbReference type="Gene3D" id="2.40.70.10">
    <property type="entry name" value="Acid Proteases"/>
    <property type="match status" value="2"/>
</dbReference>
<dbReference type="InterPro" id="IPR001461">
    <property type="entry name" value="Aspartic_peptidase_A1"/>
</dbReference>
<dbReference type="InterPro" id="IPR001969">
    <property type="entry name" value="Aspartic_peptidase_AS"/>
</dbReference>
<dbReference type="InterPro" id="IPR012848">
    <property type="entry name" value="Aspartic_peptidase_N"/>
</dbReference>
<dbReference type="InterPro" id="IPR033121">
    <property type="entry name" value="PEPTIDASE_A1"/>
</dbReference>
<dbReference type="InterPro" id="IPR021109">
    <property type="entry name" value="Peptidase_aspartic_dom_sf"/>
</dbReference>
<dbReference type="PANTHER" id="PTHR47966">
    <property type="entry name" value="BETA-SITE APP-CLEAVING ENZYME, ISOFORM A-RELATED"/>
    <property type="match status" value="1"/>
</dbReference>
<dbReference type="PANTHER" id="PTHR47966:SF49">
    <property type="entry name" value="PEPSIN A-5"/>
    <property type="match status" value="1"/>
</dbReference>
<dbReference type="Pfam" id="PF07966">
    <property type="entry name" value="A1_Propeptide"/>
    <property type="match status" value="1"/>
</dbReference>
<dbReference type="Pfam" id="PF00026">
    <property type="entry name" value="Asp"/>
    <property type="match status" value="1"/>
</dbReference>
<dbReference type="PRINTS" id="PR00792">
    <property type="entry name" value="PEPSIN"/>
</dbReference>
<dbReference type="SUPFAM" id="SSF50630">
    <property type="entry name" value="Acid proteases"/>
    <property type="match status" value="1"/>
</dbReference>
<dbReference type="PROSITE" id="PS00141">
    <property type="entry name" value="ASP_PROTEASE"/>
    <property type="match status" value="1"/>
</dbReference>
<dbReference type="PROSITE" id="PS51767">
    <property type="entry name" value="PEPTIDASE_A1"/>
    <property type="match status" value="1"/>
</dbReference>
<sequence length="380" mass="42847">MKWLVLLGLVAFSECIVKIPLRRLKTMRNVVSGKNMLNNFLKEHAYSLSQISFRGSNLTTHPLRNIKDLVYMGNITIGTPPQEFQVVFDTASSDLWVPSDFCTSPACSTHVRFRHLQSSTFRLTNKTFRITYGSGRMKGVVVHDTVRIGNLVSTDQPFGLSIEEYGFEGRIYDGVLGLNYPNISFSGAIPIFDKLKNQRAISEPVFAFYLSKDEREGSVVMFGGVDHRYYEGELNWVPLIQAGDWSVHMDRISIERKIIACSDGCKALVDTGTSDIVGPRRLVNNIHRLIGAIPRGSEHYVPCSEVNTLPSIVFTINGINYPVPGRAYILKDDRGRCYTTFQENRVSSSTETWYLGDVFLRLYFSVFDRGNDRIGLARAV</sequence>
<evidence type="ECO:0000250" key="1"/>
<evidence type="ECO:0000255" key="2"/>
<evidence type="ECO:0000255" key="3">
    <source>
        <dbReference type="PROSITE-ProRule" id="PRU01103"/>
    </source>
</evidence>
<evidence type="ECO:0000255" key="4">
    <source>
        <dbReference type="PROSITE-ProRule" id="PRU10094"/>
    </source>
</evidence>
<evidence type="ECO:0000269" key="5">
    <source>
    </source>
</evidence>
<evidence type="ECO:0000269" key="6">
    <source>
    </source>
</evidence>
<evidence type="ECO:0000269" key="7">
    <source>
    </source>
</evidence>
<evidence type="ECO:0000305" key="8"/>
<evidence type="ECO:0000305" key="9">
    <source>
    </source>
</evidence>
<protein>
    <recommendedName>
        <fullName>Pregnancy-associated glycoprotein 1</fullName>
        <shortName>PAG 1</shortName>
        <ecNumber>3.4.23.-</ecNumber>
    </recommendedName>
    <alternativeName>
        <fullName>Pregnancy-specific protein B</fullName>
        <shortName>PSP-B</shortName>
    </alternativeName>
</protein>
<reference key="1">
    <citation type="journal article" date="1991" name="Proc. Natl. Acad. Sci. U.S.A.">
        <title>Identification of the major pregnancy-specific antigens of cattle and sheep as inactive members of the aspartic proteinase family.</title>
        <authorList>
            <person name="Xie S."/>
            <person name="Low B.G."/>
            <person name="Nagel R.J."/>
            <person name="Kramer K.K."/>
            <person name="Anthony R.V."/>
            <person name="Zoli A.P."/>
            <person name="Beckers J.-F.M.P."/>
            <person name="Roberts R.M."/>
        </authorList>
    </citation>
    <scope>NUCLEOTIDE SEQUENCE [MRNA]</scope>
    <scope>PROTEIN SEQUENCE OF 54-73</scope>
    <source>
        <tissue>Placenta</tissue>
    </source>
</reference>
<reference key="2">
    <citation type="journal article" date="1995" name="Gene">
        <title>The gene encoding bovine pregnancy-associated glycoprotein-1, an inactive member of the aspartic proteinase family.</title>
        <authorList>
            <person name="Xie S."/>
            <person name="Green J."/>
            <person name="Beckers J.-F.M.P."/>
            <person name="Roberts R.M."/>
        </authorList>
    </citation>
    <scope>NUCLEOTIDE SEQUENCE [GENOMIC DNA]</scope>
</reference>
<reference key="3">
    <citation type="submission" date="2007-03" db="EMBL/GenBank/DDBJ databases">
        <authorList>
            <consortium name="NIH - Mammalian Gene Collection (MGC) project"/>
        </authorList>
    </citation>
    <scope>NUCLEOTIDE SEQUENCE [LARGE SCALE MRNA]</scope>
    <source>
        <strain>Hereford</strain>
        <tissue>Placenta</tissue>
    </source>
</reference>
<reference key="4">
    <citation type="journal article" date="2005" name="Mol. Reprod. Dev.">
        <title>Pregnancy associated glycoprotein-1, -6, -7, and -17 are major products of bovine binucleate trophoblast giant cells at midpregnancy.</title>
        <authorList>
            <person name="Klisch K."/>
            <person name="De Sousa N.M."/>
            <person name="Beckers J.F."/>
            <person name="Leiser R."/>
            <person name="Pich A."/>
        </authorList>
    </citation>
    <scope>PROTEIN SEQUENCE OF 54-68</scope>
    <scope>GLYCOSYLATION AT ASN-57</scope>
</reference>
<reference key="5">
    <citation type="journal article" date="2006" name="Reproduction">
        <title>The glycosylation of pregnancy-associated glycoproteins and prolactin-related protein-I in bovine binucleate trophoblast giant cells changes before parturition.</title>
        <authorList>
            <person name="Klisch K."/>
            <person name="Boos A."/>
            <person name="Friedrich M."/>
            <person name="Herzog K."/>
            <person name="Feldmann M."/>
            <person name="Sousa N."/>
            <person name="Beckers J."/>
            <person name="Leiser R."/>
            <person name="Schuler G."/>
        </authorList>
    </citation>
    <scope>GLYCOSYLATION</scope>
</reference>
<feature type="signal peptide" evidence="2">
    <location>
        <begin position="1"/>
        <end position="15"/>
    </location>
</feature>
<feature type="propeptide" id="PRO_0000026099" description="Activation peptide" evidence="7">
    <location>
        <begin position="16"/>
        <end position="53"/>
    </location>
</feature>
<feature type="chain" id="PRO_0000026100" description="Pregnancy-associated glycoprotein 1">
    <location>
        <begin position="54"/>
        <end position="380"/>
    </location>
</feature>
<feature type="domain" description="Peptidase A1" evidence="3">
    <location>
        <begin position="71"/>
        <end position="377"/>
    </location>
</feature>
<feature type="active site" evidence="4">
    <location>
        <position position="89"/>
    </location>
</feature>
<feature type="active site" evidence="4">
    <location>
        <position position="270"/>
    </location>
</feature>
<feature type="glycosylation site" description="N-linked (GlcNAc...) asparagine" evidence="5">
    <location>
        <position position="57"/>
    </location>
</feature>
<feature type="glycosylation site" description="N-linked (GlcNAc...) asparagine" evidence="9">
    <location>
        <position position="74"/>
    </location>
</feature>
<feature type="glycosylation site" description="N-linked (GlcNAc...) asparagine" evidence="9">
    <location>
        <position position="125"/>
    </location>
</feature>
<feature type="glycosylation site" description="N-linked (GlcNAc...) asparagine" evidence="9">
    <location>
        <position position="182"/>
    </location>
</feature>
<feature type="disulfide bond" evidence="1">
    <location>
        <begin position="102"/>
        <end position="107"/>
    </location>
</feature>
<feature type="disulfide bond" evidence="1">
    <location>
        <begin position="261"/>
        <end position="265"/>
    </location>
</feature>
<feature type="disulfide bond" evidence="1">
    <location>
        <begin position="303"/>
        <end position="337"/>
    </location>
</feature>
<feature type="sequence conflict" description="In Ref. 1; AA sequence." evidence="8" ref="1">
    <original>S</original>
    <variation>H</variation>
    <location>
        <position position="56"/>
    </location>
</feature>
<feature type="sequence conflict" description="In Ref. 1; AA sequence." evidence="8" ref="1">
    <original>TH</original>
    <variation>PG</variation>
    <location>
        <begin position="60"/>
        <end position="61"/>
    </location>
</feature>
<feature type="sequence conflict" description="In Ref. 1; AA sequence." evidence="8" ref="1">
    <original>I</original>
    <variation>F</variation>
    <location>
        <position position="66"/>
    </location>
</feature>
<comment type="function">
    <text>Appears to be proteolytically inactive.</text>
</comment>
<comment type="subcellular location">
    <subcellularLocation>
        <location>Secreted</location>
        <location>Extracellular space</location>
    </subcellularLocation>
</comment>
<comment type="tissue specificity">
    <text>Trophoblast and placental tissue. Produced specifically in the invasive binucleate cells of the placenta. Becomes detectable in maternal serum soon after implantation.</text>
</comment>
<comment type="PTM">
    <text evidence="5 6">N-Glycosylated; the glycans terminate in either N-acetyl-galactosamine (GalNAc) or N-acetyllactosamine (PubMed:15822115, PubMed:17071780). Terminal GalNAc on Asn-linked glycans is greatly reduced prior to parturition while lactosamine-type N-glycans remain unaltered (PubMed:17071780).</text>
</comment>
<comment type="similarity">
    <text evidence="8">Belongs to the peptidase A1 family.</text>
</comment>